<protein>
    <recommendedName>
        <fullName>Uncharacterized protein C16C4.16c</fullName>
    </recommendedName>
</protein>
<name>YCGG_SCHPO</name>
<sequence length="206" mass="23854">MDIVAETQIEEESLIPDATSTPLETEVVADTTLRKTALHLAGVDNLSEEQVKGFISAYAPESQCTIEWINDNECNVVYADDDVSRNALFHLIMESPTEFSEELEYQTKPHPTVPTCQFKIRYARYGDKKVKSAHLYSRYYLFHGDPREEKAQKSKSKSRNQDERGSPLDERLGPKVSDLTLMERIFQVRRKPRKSRRDRRSRVSKR</sequence>
<reference key="1">
    <citation type="journal article" date="2002" name="Nature">
        <title>The genome sequence of Schizosaccharomyces pombe.</title>
        <authorList>
            <person name="Wood V."/>
            <person name="Gwilliam R."/>
            <person name="Rajandream M.A."/>
            <person name="Lyne M.H."/>
            <person name="Lyne R."/>
            <person name="Stewart A."/>
            <person name="Sgouros J.G."/>
            <person name="Peat N."/>
            <person name="Hayles J."/>
            <person name="Baker S.G."/>
            <person name="Basham D."/>
            <person name="Bowman S."/>
            <person name="Brooks K."/>
            <person name="Brown D."/>
            <person name="Brown S."/>
            <person name="Chillingworth T."/>
            <person name="Churcher C.M."/>
            <person name="Collins M."/>
            <person name="Connor R."/>
            <person name="Cronin A."/>
            <person name="Davis P."/>
            <person name="Feltwell T."/>
            <person name="Fraser A."/>
            <person name="Gentles S."/>
            <person name="Goble A."/>
            <person name="Hamlin N."/>
            <person name="Harris D.E."/>
            <person name="Hidalgo J."/>
            <person name="Hodgson G."/>
            <person name="Holroyd S."/>
            <person name="Hornsby T."/>
            <person name="Howarth S."/>
            <person name="Huckle E.J."/>
            <person name="Hunt S."/>
            <person name="Jagels K."/>
            <person name="James K.D."/>
            <person name="Jones L."/>
            <person name="Jones M."/>
            <person name="Leather S."/>
            <person name="McDonald S."/>
            <person name="McLean J."/>
            <person name="Mooney P."/>
            <person name="Moule S."/>
            <person name="Mungall K.L."/>
            <person name="Murphy L.D."/>
            <person name="Niblett D."/>
            <person name="Odell C."/>
            <person name="Oliver K."/>
            <person name="O'Neil S."/>
            <person name="Pearson D."/>
            <person name="Quail M.A."/>
            <person name="Rabbinowitsch E."/>
            <person name="Rutherford K.M."/>
            <person name="Rutter S."/>
            <person name="Saunders D."/>
            <person name="Seeger K."/>
            <person name="Sharp S."/>
            <person name="Skelton J."/>
            <person name="Simmonds M.N."/>
            <person name="Squares R."/>
            <person name="Squares S."/>
            <person name="Stevens K."/>
            <person name="Taylor K."/>
            <person name="Taylor R.G."/>
            <person name="Tivey A."/>
            <person name="Walsh S.V."/>
            <person name="Warren T."/>
            <person name="Whitehead S."/>
            <person name="Woodward J.R."/>
            <person name="Volckaert G."/>
            <person name="Aert R."/>
            <person name="Robben J."/>
            <person name="Grymonprez B."/>
            <person name="Weltjens I."/>
            <person name="Vanstreels E."/>
            <person name="Rieger M."/>
            <person name="Schaefer M."/>
            <person name="Mueller-Auer S."/>
            <person name="Gabel C."/>
            <person name="Fuchs M."/>
            <person name="Duesterhoeft A."/>
            <person name="Fritzc C."/>
            <person name="Holzer E."/>
            <person name="Moestl D."/>
            <person name="Hilbert H."/>
            <person name="Borzym K."/>
            <person name="Langer I."/>
            <person name="Beck A."/>
            <person name="Lehrach H."/>
            <person name="Reinhardt R."/>
            <person name="Pohl T.M."/>
            <person name="Eger P."/>
            <person name="Zimmermann W."/>
            <person name="Wedler H."/>
            <person name="Wambutt R."/>
            <person name="Purnelle B."/>
            <person name="Goffeau A."/>
            <person name="Cadieu E."/>
            <person name="Dreano S."/>
            <person name="Gloux S."/>
            <person name="Lelaure V."/>
            <person name="Mottier S."/>
            <person name="Galibert F."/>
            <person name="Aves S.J."/>
            <person name="Xiang Z."/>
            <person name="Hunt C."/>
            <person name="Moore K."/>
            <person name="Hurst S.M."/>
            <person name="Lucas M."/>
            <person name="Rochet M."/>
            <person name="Gaillardin C."/>
            <person name="Tallada V.A."/>
            <person name="Garzon A."/>
            <person name="Thode G."/>
            <person name="Daga R.R."/>
            <person name="Cruzado L."/>
            <person name="Jimenez J."/>
            <person name="Sanchez M."/>
            <person name="del Rey F."/>
            <person name="Benito J."/>
            <person name="Dominguez A."/>
            <person name="Revuelta J.L."/>
            <person name="Moreno S."/>
            <person name="Armstrong J."/>
            <person name="Forsburg S.L."/>
            <person name="Cerutti L."/>
            <person name="Lowe T."/>
            <person name="McCombie W.R."/>
            <person name="Paulsen I."/>
            <person name="Potashkin J."/>
            <person name="Shpakovski G.V."/>
            <person name="Ussery D."/>
            <person name="Barrell B.G."/>
            <person name="Nurse P."/>
        </authorList>
    </citation>
    <scope>NUCLEOTIDE SEQUENCE [LARGE SCALE GENOMIC DNA]</scope>
    <source>
        <strain>972 / ATCC 24843</strain>
    </source>
</reference>
<feature type="chain" id="PRO_0000116546" description="Uncharacterized protein C16C4.16c">
    <location>
        <begin position="1"/>
        <end position="206"/>
    </location>
</feature>
<feature type="region of interest" description="Disordered" evidence="1">
    <location>
        <begin position="147"/>
        <end position="206"/>
    </location>
</feature>
<feature type="compositionally biased region" description="Basic and acidic residues" evidence="1">
    <location>
        <begin position="159"/>
        <end position="173"/>
    </location>
</feature>
<feature type="compositionally biased region" description="Basic residues" evidence="1">
    <location>
        <begin position="187"/>
        <end position="206"/>
    </location>
</feature>
<dbReference type="EMBL" id="CU329672">
    <property type="protein sequence ID" value="CAA20754.2"/>
    <property type="molecule type" value="Genomic_DNA"/>
</dbReference>
<dbReference type="PIR" id="T41106">
    <property type="entry name" value="T41106"/>
</dbReference>
<dbReference type="SMR" id="O74460"/>
<dbReference type="BioGRID" id="275951">
    <property type="interactions" value="3"/>
</dbReference>
<dbReference type="STRING" id="284812.O74460"/>
<dbReference type="iPTMnet" id="O74460"/>
<dbReference type="PaxDb" id="4896-SPCC16C4.16c.1"/>
<dbReference type="EnsemblFungi" id="SPCC16C4.16c.1">
    <property type="protein sequence ID" value="SPCC16C4.16c.1:pep"/>
    <property type="gene ID" value="SPCC16C4.16c"/>
</dbReference>
<dbReference type="KEGG" id="spo:2539386"/>
<dbReference type="PomBase" id="SPCC16C4.16c"/>
<dbReference type="VEuPathDB" id="FungiDB:SPCC16C4.16c"/>
<dbReference type="eggNOG" id="ENOG502S34X">
    <property type="taxonomic scope" value="Eukaryota"/>
</dbReference>
<dbReference type="HOGENOM" id="CLU_109927_0_0_1"/>
<dbReference type="InParanoid" id="O74460"/>
<dbReference type="OMA" id="HIRYARY"/>
<dbReference type="PhylomeDB" id="O74460"/>
<dbReference type="PRO" id="PR:O74460"/>
<dbReference type="Proteomes" id="UP000002485">
    <property type="component" value="Chromosome III"/>
</dbReference>
<dbReference type="GO" id="GO:0005829">
    <property type="term" value="C:cytosol"/>
    <property type="evidence" value="ECO:0007005"/>
    <property type="project" value="PomBase"/>
</dbReference>
<dbReference type="GO" id="GO:0005846">
    <property type="term" value="C:nuclear cap binding complex"/>
    <property type="evidence" value="ECO:0000266"/>
    <property type="project" value="PomBase"/>
</dbReference>
<dbReference type="GO" id="GO:0005634">
    <property type="term" value="C:nucleus"/>
    <property type="evidence" value="ECO:0007005"/>
    <property type="project" value="PomBase"/>
</dbReference>
<dbReference type="GO" id="GO:0003729">
    <property type="term" value="F:mRNA binding"/>
    <property type="evidence" value="ECO:0007669"/>
    <property type="project" value="InterPro"/>
</dbReference>
<dbReference type="GO" id="GO:0000340">
    <property type="term" value="F:RNA 7-methylguanosine cap binding"/>
    <property type="evidence" value="ECO:0000266"/>
    <property type="project" value="PomBase"/>
</dbReference>
<dbReference type="GO" id="GO:0071039">
    <property type="term" value="P:nuclear polyadenylation-dependent CUT catabolic process"/>
    <property type="evidence" value="ECO:0000305"/>
    <property type="project" value="PomBase"/>
</dbReference>
<dbReference type="GO" id="GO:0000184">
    <property type="term" value="P:nuclear-transcribed mRNA catabolic process, nonsense-mediated decay"/>
    <property type="evidence" value="ECO:0000305"/>
    <property type="project" value="PomBase"/>
</dbReference>
<dbReference type="InterPro" id="IPR019416">
    <property type="entry name" value="NCBP3"/>
</dbReference>
<dbReference type="PANTHER" id="PTHR16291">
    <property type="entry name" value="NUCLEAR CAP-BINDING PROTEIN SUBUNIT 3"/>
    <property type="match status" value="1"/>
</dbReference>
<dbReference type="PANTHER" id="PTHR16291:SF0">
    <property type="entry name" value="NUCLEAR CAP-BINDING PROTEIN SUBUNIT 3"/>
    <property type="match status" value="1"/>
</dbReference>
<dbReference type="Pfam" id="PF10309">
    <property type="entry name" value="NCBP3"/>
    <property type="match status" value="1"/>
</dbReference>
<organism>
    <name type="scientific">Schizosaccharomyces pombe (strain 972 / ATCC 24843)</name>
    <name type="common">Fission yeast</name>
    <dbReference type="NCBI Taxonomy" id="284812"/>
    <lineage>
        <taxon>Eukaryota</taxon>
        <taxon>Fungi</taxon>
        <taxon>Dikarya</taxon>
        <taxon>Ascomycota</taxon>
        <taxon>Taphrinomycotina</taxon>
        <taxon>Schizosaccharomycetes</taxon>
        <taxon>Schizosaccharomycetales</taxon>
        <taxon>Schizosaccharomycetaceae</taxon>
        <taxon>Schizosaccharomyces</taxon>
    </lineage>
</organism>
<accession>O74460</accession>
<evidence type="ECO:0000256" key="1">
    <source>
        <dbReference type="SAM" id="MobiDB-lite"/>
    </source>
</evidence>
<gene>
    <name type="ORF">SPCC16C4.16c</name>
</gene>
<proteinExistence type="predicted"/>
<keyword id="KW-1185">Reference proteome</keyword>